<sequence>MLKELRPAIVILVALTIITGLIYPLAMTGAAQVLFPYQAQGSLIEQGGKTIGSALIGQSFTADRYFHGRPSATTAPDPKDASKTVPAPYNAVNSMGSNLGPTSKALADRLRQDVATLKAQNPSAAVPVDLVTASGSGLDPDISPQAARFQVPRVAKARNLPEAEVETLIDSRTEGRDLGFLGEPRVNVLKLNLALDRMAASGQPR</sequence>
<organism>
    <name type="scientific">Nitrobacter hamburgensis (strain DSM 10229 / NCIMB 13809 / X14)</name>
    <dbReference type="NCBI Taxonomy" id="323097"/>
    <lineage>
        <taxon>Bacteria</taxon>
        <taxon>Pseudomonadati</taxon>
        <taxon>Pseudomonadota</taxon>
        <taxon>Alphaproteobacteria</taxon>
        <taxon>Hyphomicrobiales</taxon>
        <taxon>Nitrobacteraceae</taxon>
        <taxon>Nitrobacter</taxon>
    </lineage>
</organism>
<accession>Q1QJ48</accession>
<keyword id="KW-0067">ATP-binding</keyword>
<keyword id="KW-0997">Cell inner membrane</keyword>
<keyword id="KW-1003">Cell membrane</keyword>
<keyword id="KW-0406">Ion transport</keyword>
<keyword id="KW-0472">Membrane</keyword>
<keyword id="KW-0547">Nucleotide-binding</keyword>
<keyword id="KW-0630">Potassium</keyword>
<keyword id="KW-0633">Potassium transport</keyword>
<keyword id="KW-1185">Reference proteome</keyword>
<keyword id="KW-0812">Transmembrane</keyword>
<keyword id="KW-1133">Transmembrane helix</keyword>
<keyword id="KW-0813">Transport</keyword>
<gene>
    <name evidence="1" type="primary">kdpC</name>
    <name type="ordered locus">Nham_2992</name>
</gene>
<protein>
    <recommendedName>
        <fullName evidence="1">Potassium-transporting ATPase KdpC subunit</fullName>
    </recommendedName>
    <alternativeName>
        <fullName evidence="1">ATP phosphohydrolase [potassium-transporting] C chain</fullName>
    </alternativeName>
    <alternativeName>
        <fullName evidence="1">Potassium-binding and translocating subunit C</fullName>
    </alternativeName>
    <alternativeName>
        <fullName evidence="1">Potassium-translocating ATPase C chain</fullName>
    </alternativeName>
</protein>
<evidence type="ECO:0000255" key="1">
    <source>
        <dbReference type="HAMAP-Rule" id="MF_00276"/>
    </source>
</evidence>
<proteinExistence type="inferred from homology"/>
<name>KDPC_NITHX</name>
<comment type="function">
    <text evidence="1">Part of the high-affinity ATP-driven potassium transport (or Kdp) system, which catalyzes the hydrolysis of ATP coupled with the electrogenic transport of potassium into the cytoplasm. This subunit acts as a catalytic chaperone that increases the ATP-binding affinity of the ATP-hydrolyzing subunit KdpB by the formation of a transient KdpB/KdpC/ATP ternary complex.</text>
</comment>
<comment type="subunit">
    <text evidence="1">The system is composed of three essential subunits: KdpA, KdpB and KdpC.</text>
</comment>
<comment type="subcellular location">
    <subcellularLocation>
        <location evidence="1">Cell inner membrane</location>
        <topology evidence="1">Single-pass membrane protein</topology>
    </subcellularLocation>
</comment>
<comment type="similarity">
    <text evidence="1">Belongs to the KdpC family.</text>
</comment>
<dbReference type="EMBL" id="CP000319">
    <property type="protein sequence ID" value="ABE63749.1"/>
    <property type="molecule type" value="Genomic_DNA"/>
</dbReference>
<dbReference type="RefSeq" id="WP_011511411.1">
    <property type="nucleotide sequence ID" value="NC_007964.1"/>
</dbReference>
<dbReference type="SMR" id="Q1QJ48"/>
<dbReference type="STRING" id="323097.Nham_2992"/>
<dbReference type="KEGG" id="nha:Nham_2992"/>
<dbReference type="eggNOG" id="COG2156">
    <property type="taxonomic scope" value="Bacteria"/>
</dbReference>
<dbReference type="HOGENOM" id="CLU_077094_2_0_5"/>
<dbReference type="OrthoDB" id="9788285at2"/>
<dbReference type="Proteomes" id="UP000001953">
    <property type="component" value="Chromosome"/>
</dbReference>
<dbReference type="GO" id="GO:0005886">
    <property type="term" value="C:plasma membrane"/>
    <property type="evidence" value="ECO:0007669"/>
    <property type="project" value="UniProtKB-SubCell"/>
</dbReference>
<dbReference type="GO" id="GO:0005524">
    <property type="term" value="F:ATP binding"/>
    <property type="evidence" value="ECO:0007669"/>
    <property type="project" value="UniProtKB-UniRule"/>
</dbReference>
<dbReference type="GO" id="GO:0008556">
    <property type="term" value="F:P-type potassium transmembrane transporter activity"/>
    <property type="evidence" value="ECO:0007669"/>
    <property type="project" value="InterPro"/>
</dbReference>
<dbReference type="HAMAP" id="MF_00276">
    <property type="entry name" value="KdpC"/>
    <property type="match status" value="1"/>
</dbReference>
<dbReference type="InterPro" id="IPR003820">
    <property type="entry name" value="KdpC"/>
</dbReference>
<dbReference type="NCBIfam" id="TIGR00681">
    <property type="entry name" value="kdpC"/>
    <property type="match status" value="1"/>
</dbReference>
<dbReference type="NCBIfam" id="NF001454">
    <property type="entry name" value="PRK00315.1"/>
    <property type="match status" value="1"/>
</dbReference>
<dbReference type="NCBIfam" id="NF010603">
    <property type="entry name" value="PRK13999.1"/>
    <property type="match status" value="1"/>
</dbReference>
<dbReference type="PANTHER" id="PTHR30042">
    <property type="entry name" value="POTASSIUM-TRANSPORTING ATPASE C CHAIN"/>
    <property type="match status" value="1"/>
</dbReference>
<dbReference type="PANTHER" id="PTHR30042:SF2">
    <property type="entry name" value="POTASSIUM-TRANSPORTING ATPASE KDPC SUBUNIT"/>
    <property type="match status" value="1"/>
</dbReference>
<dbReference type="Pfam" id="PF02669">
    <property type="entry name" value="KdpC"/>
    <property type="match status" value="1"/>
</dbReference>
<dbReference type="PIRSF" id="PIRSF001296">
    <property type="entry name" value="K_ATPase_KdpC"/>
    <property type="match status" value="1"/>
</dbReference>
<reference key="1">
    <citation type="submission" date="2006-03" db="EMBL/GenBank/DDBJ databases">
        <title>Complete sequence of chromosome of Nitrobacter hamburgensis X14.</title>
        <authorList>
            <consortium name="US DOE Joint Genome Institute"/>
            <person name="Copeland A."/>
            <person name="Lucas S."/>
            <person name="Lapidus A."/>
            <person name="Barry K."/>
            <person name="Detter J.C."/>
            <person name="Glavina del Rio T."/>
            <person name="Hammon N."/>
            <person name="Israni S."/>
            <person name="Dalin E."/>
            <person name="Tice H."/>
            <person name="Pitluck S."/>
            <person name="Chain P."/>
            <person name="Malfatti S."/>
            <person name="Shin M."/>
            <person name="Vergez L."/>
            <person name="Schmutz J."/>
            <person name="Larimer F."/>
            <person name="Land M."/>
            <person name="Hauser L."/>
            <person name="Kyrpides N."/>
            <person name="Ivanova N."/>
            <person name="Ward B."/>
            <person name="Arp D."/>
            <person name="Klotz M."/>
            <person name="Stein L."/>
            <person name="O'Mullan G."/>
            <person name="Starkenburg S."/>
            <person name="Sayavedra L."/>
            <person name="Poret-Peterson A.T."/>
            <person name="Gentry M.E."/>
            <person name="Bruce D."/>
            <person name="Richardson P."/>
        </authorList>
    </citation>
    <scope>NUCLEOTIDE SEQUENCE [LARGE SCALE GENOMIC DNA]</scope>
    <source>
        <strain>DSM 10229 / NCIMB 13809 / X14</strain>
    </source>
</reference>
<feature type="chain" id="PRO_1000022298" description="Potassium-transporting ATPase KdpC subunit">
    <location>
        <begin position="1"/>
        <end position="205"/>
    </location>
</feature>
<feature type="transmembrane region" description="Helical" evidence="1">
    <location>
        <begin position="7"/>
        <end position="27"/>
    </location>
</feature>